<protein>
    <recommendedName>
        <fullName evidence="3">Oxidoreductase GME11367</fullName>
        <ecNumber evidence="5">1.-.-.-</ecNumber>
    </recommendedName>
    <alternativeName>
        <fullName evidence="3">Dibenzodioxocinones biosynthesis cluster protein GME11367</fullName>
    </alternativeName>
</protein>
<gene>
    <name evidence="3" type="ORF">GME11367</name>
</gene>
<feature type="chain" id="PRO_0000456745" description="Oxidoreductase GME11367">
    <location>
        <begin position="1"/>
        <end position="262"/>
    </location>
</feature>
<accession>A0A5B8YUY5</accession>
<proteinExistence type="evidence at transcript level"/>
<sequence>MATYAVLGSTGNTGKCLVELALQQPNAKVHAYCRNKTKLTNQLPIIIDNKRVEVFEGSIYDVDLFVDCLRGCRAVFLTITTNDNVPGCHMSQDSVRTIIAALVKLKKQQGPSGTIPKILLLSSATIDEHLNRDMPGWFKPIMKAAASNVYDDLKVAEQMLRAEDDWLTTIYIKPGGLSLDVQRGHKLSLDKQESFISYYDLAAAMIEAADDVEGRYDMKNVGVVNANGGARFPPGTPMCIAVGLLRHFFPWLHNYLPSTGPA</sequence>
<name>GME67_PESMI</name>
<comment type="function">
    <text evidence="1 5">Oxidoreductase; part of the gene cluster that mediates the biosynthesis of dibenzodioxocinones such as pestalotiollide B, a novel class of inhibitors against cholesterol ester transfer protein (CEPT) (PubMed:31474098). The biosynthesis initiates from condensation of acetate and malonate units catalyzed by the non-reducing PKS pks8/GME11356. Pks8/GME11356 lacks a thioesterase (TE) domain, which is important to the cyclizing of the third ring of atrochrysone carboxylic acid, and the esterase GME11355 might play the role of TE and catalyzes the cyclization reaction of the C ring. The lactamase-like protein GME11357 (or other beta-lactamases in Pestalotiopsis microspora) probably hydrolyzes the thioester bond between the ACP of pks8/GME11356 and the intermediate to release atrochrysone carboxylic acid, which is spontaneously dehydrates to form endocrocin anthrone. Endocrocin anthrone is further converted to emodin via the endocrocin intermediate. Emodin is then oxidized by several enzymes such as the Baeyer-Villiger oxidase GME11358, the oxidoreductase GME11367, the short chain dehydrogenase/reductase GME11373, as well as by other oxidoreductases from the cluster, to modify the A and C rings and open the B ring, and finally yield monodictyphenone. The prenyltransferase GME11375 may catalyze the addition reaction between the C5 side chains and the carbon bone of dibenzodioxocinones. The remaining biochemical reactions to the final product dibenzodioxocinones should be methylation catalyzed by methyltransferase GME11366 and reduction and lactonization reaction catalyzed by a series of oxidordeuctases (Probable).</text>
</comment>
<comment type="pathway">
    <text evidence="5">Secondary metabolite biosynthesis.</text>
</comment>
<comment type="induction">
    <text evidence="2">The expression of the dibenzodioxocinones biosynthesis cluster is positively regulated by the transcription factor dibT.</text>
</comment>
<comment type="similarity">
    <text evidence="4">Belongs to the avfA family.</text>
</comment>
<keyword id="KW-0503">Monooxygenase</keyword>
<keyword id="KW-0560">Oxidoreductase</keyword>
<organism>
    <name type="scientific">Pestalotiopsis microspora</name>
    <dbReference type="NCBI Taxonomy" id="85828"/>
    <lineage>
        <taxon>Eukaryota</taxon>
        <taxon>Fungi</taxon>
        <taxon>Dikarya</taxon>
        <taxon>Ascomycota</taxon>
        <taxon>Pezizomycotina</taxon>
        <taxon>Sordariomycetes</taxon>
        <taxon>Xylariomycetidae</taxon>
        <taxon>Amphisphaeriales</taxon>
        <taxon>Sporocadaceae</taxon>
        <taxon>Pestalotiopsis</taxon>
    </lineage>
</organism>
<dbReference type="EC" id="1.-.-.-" evidence="5"/>
<dbReference type="EMBL" id="MK590986">
    <property type="protein sequence ID" value="QED41498.1"/>
    <property type="molecule type" value="mRNA"/>
</dbReference>
<dbReference type="SMR" id="A0A5B8YUY5"/>
<dbReference type="GO" id="GO:0004497">
    <property type="term" value="F:monooxygenase activity"/>
    <property type="evidence" value="ECO:0007669"/>
    <property type="project" value="UniProtKB-KW"/>
</dbReference>
<dbReference type="Gene3D" id="3.40.50.720">
    <property type="entry name" value="NAD(P)-binding Rossmann-like Domain"/>
    <property type="match status" value="1"/>
</dbReference>
<dbReference type="InterPro" id="IPR016040">
    <property type="entry name" value="NAD(P)-bd_dom"/>
</dbReference>
<dbReference type="InterPro" id="IPR036291">
    <property type="entry name" value="NAD(P)-bd_dom_sf"/>
</dbReference>
<dbReference type="PANTHER" id="PTHR15020">
    <property type="entry name" value="FLAVIN REDUCTASE-RELATED"/>
    <property type="match status" value="1"/>
</dbReference>
<dbReference type="PANTHER" id="PTHR15020:SF37">
    <property type="entry name" value="OXIDOREDUCTASE MDPK"/>
    <property type="match status" value="1"/>
</dbReference>
<dbReference type="Pfam" id="PF13460">
    <property type="entry name" value="NAD_binding_10"/>
    <property type="match status" value="1"/>
</dbReference>
<dbReference type="SUPFAM" id="SSF51735">
    <property type="entry name" value="NAD(P)-binding Rossmann-fold domains"/>
    <property type="match status" value="1"/>
</dbReference>
<evidence type="ECO:0000269" key="1">
    <source>
    </source>
</evidence>
<evidence type="ECO:0000269" key="2">
    <source>
    </source>
</evidence>
<evidence type="ECO:0000303" key="3">
    <source>
    </source>
</evidence>
<evidence type="ECO:0000305" key="4"/>
<evidence type="ECO:0000305" key="5">
    <source>
    </source>
</evidence>
<reference key="1">
    <citation type="journal article" date="2019" name="J. Microbiol. Biotechnol.">
        <title>A gene cluster for the biosynthesis of dibenzodioxocinons in the endophyte Pestalotiopsis microspora, a taxol producer.</title>
        <authorList>
            <person name="Liu Y."/>
            <person name="Chen L."/>
            <person name="Xie Q."/>
            <person name="Yu X."/>
            <person name="Duan A."/>
            <person name="Lin Y."/>
            <person name="Xiang B."/>
            <person name="Hao X."/>
            <person name="Chen W."/>
            <person name="Zhu X."/>
        </authorList>
    </citation>
    <scope>NUCLEOTIDE SEQUENCE [MRNA]</scope>
    <scope>FUNCTION</scope>
    <scope>PATHWAY</scope>
    <source>
        <strain>NK17</strain>
    </source>
</reference>
<reference key="2">
    <citation type="journal article" date="2022" name="Microbiol. Res.">
        <title>Acquiring novel chemicals by overexpression of a transcription factor DibT in the dibenzodioxocinone biosynthetic cluster in Pestalotiopsis microspora.</title>
        <authorList>
            <person name="Liu Y."/>
            <person name="Fu Y."/>
            <person name="Zhou M."/>
            <person name="Hao X."/>
            <person name="Zhang P."/>
            <person name="Zhu X."/>
        </authorList>
    </citation>
    <scope>INDUCTION</scope>
</reference>